<keyword id="KW-0223">Dioxygenase</keyword>
<keyword id="KW-0408">Iron</keyword>
<keyword id="KW-0479">Metal-binding</keyword>
<keyword id="KW-0560">Oxidoreductase</keyword>
<organism>
    <name type="scientific">Metarhizium robertsii (strain ARSEF 23 / ATCC MYA-3075)</name>
    <name type="common">Metarhizium anisopliae (strain ARSEF 23)</name>
    <dbReference type="NCBI Taxonomy" id="655844"/>
    <lineage>
        <taxon>Eukaryota</taxon>
        <taxon>Fungi</taxon>
        <taxon>Dikarya</taxon>
        <taxon>Ascomycota</taxon>
        <taxon>Pezizomycotina</taxon>
        <taxon>Sordariomycetes</taxon>
        <taxon>Hypocreomycetidae</taxon>
        <taxon>Hypocreales</taxon>
        <taxon>Clavicipitaceae</taxon>
        <taxon>Metarhizium</taxon>
    </lineage>
</organism>
<sequence length="331" mass="37049">MINSDAQSAQKQVEVEKPDEKYSAPRLLPPIPDSYQPAKAITKIPATSSLEDILAILERDGGVILTDFVSLQELDKIDEELEPYTKSSIADDDSYNNFIGKKTLVIPGLVGKSDTIANILDTNETIDKLLKVILEERYPAVFEQHTEELVVDPLLSICMGFHVGHGSPRQALHRDDMIFSSKHRPDMKINEVDGFSCFLAGTRITRENGGTMVILGSHKWEHDRRGRPDEVSFLEMERGSAFIFLSTLAHGAGYNTIPGEVRKITNLVFCRGTLRTEENQFLCVPRSKVLKMSPKMQTLLGFKKPAGSWLGMVENEDPAKDLEAIYEKMLK</sequence>
<reference key="1">
    <citation type="journal article" date="2011" name="PLoS Genet.">
        <title>Genome sequencing and comparative transcriptomics of the model entomopathogenic fungi Metarhizium anisopliae and M. acridum.</title>
        <authorList>
            <person name="Gao Q."/>
            <person name="Jin K."/>
            <person name="Ying S.-H."/>
            <person name="Zhang Y."/>
            <person name="Xiao G."/>
            <person name="Shang Y."/>
            <person name="Duan Z."/>
            <person name="Hu X."/>
            <person name="Xie X.-Q."/>
            <person name="Zhou G."/>
            <person name="Peng G."/>
            <person name="Luo Z."/>
            <person name="Huang W."/>
            <person name="Wang B."/>
            <person name="Fang W."/>
            <person name="Wang S."/>
            <person name="Zhong Y."/>
            <person name="Ma L.-J."/>
            <person name="St Leger R.J."/>
            <person name="Zhao G.-P."/>
            <person name="Pei Y."/>
            <person name="Feng M.-G."/>
            <person name="Xia Y."/>
            <person name="Wang C."/>
        </authorList>
    </citation>
    <scope>NUCLEOTIDE SEQUENCE [LARGE SCALE GENOMIC DNA]</scope>
    <source>
        <strain>ARSEF 23 / ATCC MYA-3075</strain>
    </source>
</reference>
<reference key="2">
    <citation type="journal article" date="2014" name="Proc. Natl. Acad. Sci. U.S.A.">
        <title>Trajectory and genomic determinants of fungal-pathogen speciation and host adaptation.</title>
        <authorList>
            <person name="Hu X."/>
            <person name="Xiao G."/>
            <person name="Zheng P."/>
            <person name="Shang Y."/>
            <person name="Su Y."/>
            <person name="Zhang X."/>
            <person name="Liu X."/>
            <person name="Zhan S."/>
            <person name="St Leger R.J."/>
            <person name="Wang C."/>
        </authorList>
    </citation>
    <scope>GENOME REANNOTATION</scope>
    <source>
        <strain>ARSEF 23 / ATCC MYA-3075</strain>
    </source>
</reference>
<reference key="3">
    <citation type="journal article" date="2017" name="G3 (Bethesda)">
        <title>Swainsonine biosynthesis genes in diverse symbiotic and pathogenic fungi.</title>
        <authorList>
            <person name="Cook D."/>
            <person name="Donzelli B.G."/>
            <person name="Creamer R."/>
            <person name="Baucom D.L."/>
            <person name="Gardner D.R."/>
            <person name="Pan J."/>
            <person name="Moore N."/>
            <person name="Jaromczyk J.W."/>
            <person name="Schardl C.L."/>
        </authorList>
    </citation>
    <scope>FUNCTION</scope>
    <scope>PATHWAY</scope>
</reference>
<reference key="4">
    <citation type="journal article" date="2020" name="ACS Chem. Biol.">
        <title>Unveiling of Swainsonine Biosynthesis via a Multibranched Pathway in Fungi.</title>
        <authorList>
            <person name="Luo F."/>
            <person name="Hong S."/>
            <person name="Chen B."/>
            <person name="Yin Y."/>
            <person name="Tang G."/>
            <person name="Hu F."/>
            <person name="Zhang H."/>
            <person name="Wang C."/>
        </authorList>
    </citation>
    <scope>FUNCTION</scope>
    <scope>DISRUPTION PHENOTYPE</scope>
    <scope>PATHWAY</scope>
</reference>
<evidence type="ECO:0000250" key="1">
    <source>
        <dbReference type="UniProtKB" id="O14832"/>
    </source>
</evidence>
<evidence type="ECO:0000250" key="2">
    <source>
        <dbReference type="UniProtKB" id="Q4WAW9"/>
    </source>
</evidence>
<evidence type="ECO:0000256" key="3">
    <source>
        <dbReference type="SAM" id="MobiDB-lite"/>
    </source>
</evidence>
<evidence type="ECO:0000269" key="4">
    <source>
    </source>
</evidence>
<evidence type="ECO:0000269" key="5">
    <source>
    </source>
</evidence>
<evidence type="ECO:0000303" key="6">
    <source>
    </source>
</evidence>
<evidence type="ECO:0000305" key="7"/>
<evidence type="ECO:0000305" key="8">
    <source>
    </source>
</evidence>
<evidence type="ECO:0000305" key="9">
    <source>
    </source>
</evidence>
<name>SWNH2_METRA</name>
<accession>E9F8M4</accession>
<dbReference type="EC" id="1.14.11.-" evidence="8"/>
<dbReference type="EMBL" id="ADNJ02000001">
    <property type="protein sequence ID" value="EFY95970.1"/>
    <property type="molecule type" value="Genomic_DNA"/>
</dbReference>
<dbReference type="RefSeq" id="XP_007824812.1">
    <property type="nucleotide sequence ID" value="XM_007826621.1"/>
</dbReference>
<dbReference type="SMR" id="E9F8M4"/>
<dbReference type="GeneID" id="19262909"/>
<dbReference type="KEGG" id="maj:MAA_08623"/>
<dbReference type="HOGENOM" id="CLU_047725_0_0_1"/>
<dbReference type="OrthoDB" id="445007at2759"/>
<dbReference type="Proteomes" id="UP000002498">
    <property type="component" value="Unassembled WGS sequence"/>
</dbReference>
<dbReference type="GO" id="GO:0051213">
    <property type="term" value="F:dioxygenase activity"/>
    <property type="evidence" value="ECO:0007669"/>
    <property type="project" value="UniProtKB-KW"/>
</dbReference>
<dbReference type="GO" id="GO:0046872">
    <property type="term" value="F:metal ion binding"/>
    <property type="evidence" value="ECO:0007669"/>
    <property type="project" value="UniProtKB-KW"/>
</dbReference>
<dbReference type="Gene3D" id="2.60.120.620">
    <property type="entry name" value="q2cbj1_9rhob like domain"/>
    <property type="match status" value="1"/>
</dbReference>
<dbReference type="InterPro" id="IPR008775">
    <property type="entry name" value="Phytyl_CoA_dOase-like"/>
</dbReference>
<dbReference type="PANTHER" id="PTHR20883">
    <property type="entry name" value="PHYTANOYL-COA DIOXYGENASE DOMAIN CONTAINING 1"/>
    <property type="match status" value="1"/>
</dbReference>
<dbReference type="PANTHER" id="PTHR20883:SF45">
    <property type="entry name" value="PHYTANOYL-COA DIOXYGENASE FAMILY PROTEIN"/>
    <property type="match status" value="1"/>
</dbReference>
<dbReference type="Pfam" id="PF05721">
    <property type="entry name" value="PhyH"/>
    <property type="match status" value="1"/>
</dbReference>
<dbReference type="SUPFAM" id="SSF51197">
    <property type="entry name" value="Clavaminate synthase-like"/>
    <property type="match status" value="1"/>
</dbReference>
<gene>
    <name evidence="6" type="primary">swnH2</name>
    <name type="ORF">MAA_08623</name>
</gene>
<comment type="function">
    <text evidence="4 5 9">Dioxygenase; part of the gene cluster that mediates the biosynthesis of swainsonine (SW), a cytotoxic fungal alkaloid and a potential cancer therapy drug (PubMed:28381497, PubMed:32786262). Swainsonine production occurs via a multibranched pathway and is dispensable for fungal colonization of plants and infection of insect hosts (PubMed:32786262). The first step of swainsonine biosynthesis is the production of the precursor pipecolic acid (PA) via conversion of L-lysine (Lys) to 1-piperideine-6-carboxylate (P6C) by the aminotransferase swnA, the latter being further reduced to PA by the reductase swnR (PubMed:32786262). PA can be converted from lysine by both the SW biosynthetic cluster and the unclustered genes such as lysine cyclodeaminase (PubMed:32786262). The PKS-NRPS hybrid synthetase swnK uptakes and condensates PA and malonyl-CoA with and without skipping of the ketoreductase (KR) domain in order to produce 3 intermediates, 1-oxoindolizidine, (1S)-1-hydroxyindolizin, and (1R)-1-hydroxyindolizine; with the transisomer (1S)-1-hydroxyindolizin being predominant (PubMed:32786262). The terminal thioester reductase (TE) domain of swnK is involved in reduction of the thioester bond to release the intermediate aldehydes (PubMed:32786262). The oxidoreductase swnN could contribute to the reduction of 1-oxoindolizidine to (1S)-1-hydroxyindolizin and (1R)-1-hydroxyindolizine, contributing to the major route of SW production (Probable). The dioxygenase swnH2 would be responsible for the oxidization of (1R)-1-hydroxyindolizine into (1R,2S)-1,2-dihydroxyindolizine and of (1S)-1-hydroxyindolizin to yield both (1R,2S)-1,2-dihydroxyindolizine and (1S,2S)-1,2-dihydroxyindolizine (PubMed:32786262). The dioxygenase swnH1 then performs the conversion of the 1,2-dihydroxyindolizine epimers to SW (PubMed:32786262).</text>
</comment>
<comment type="cofactor">
    <cofactor evidence="2">
        <name>Fe cation</name>
        <dbReference type="ChEBI" id="CHEBI:24875"/>
    </cofactor>
</comment>
<comment type="pathway">
    <text evidence="5">Mycotoxin biosynthesis.</text>
</comment>
<comment type="subunit">
    <text evidence="2">Homodimer.</text>
</comment>
<comment type="disruption phenotype">
    <text evidence="5">Abolishes the production of swainsonine as well as of the 1,2-dihydroxyindolizine epimers intermediates.</text>
</comment>
<comment type="similarity">
    <text evidence="7">Belongs to the PhyH family.</text>
</comment>
<proteinExistence type="inferred from homology"/>
<protein>
    <recommendedName>
        <fullName evidence="6">Dioxygenase swnH2</fullName>
        <ecNumber evidence="8">1.14.11.-</ecNumber>
    </recommendedName>
    <alternativeName>
        <fullName evidence="6">Swainsonine biosynthesis gene cluster protein H2</fullName>
    </alternativeName>
</protein>
<feature type="chain" id="PRO_0000441184" description="Dioxygenase swnH2">
    <location>
        <begin position="1"/>
        <end position="331"/>
    </location>
</feature>
<feature type="region of interest" description="Disordered" evidence="3">
    <location>
        <begin position="1"/>
        <end position="31"/>
    </location>
</feature>
<feature type="compositionally biased region" description="Polar residues" evidence="3">
    <location>
        <begin position="1"/>
        <end position="11"/>
    </location>
</feature>
<feature type="compositionally biased region" description="Basic and acidic residues" evidence="3">
    <location>
        <begin position="13"/>
        <end position="23"/>
    </location>
</feature>
<feature type="binding site" evidence="1">
    <location>
        <position position="173"/>
    </location>
    <ligand>
        <name>Fe cation</name>
        <dbReference type="ChEBI" id="CHEBI:24875"/>
    </ligand>
</feature>
<feature type="binding site" evidence="1">
    <location>
        <position position="175"/>
    </location>
    <ligand>
        <name>Fe cation</name>
        <dbReference type="ChEBI" id="CHEBI:24875"/>
    </ligand>
</feature>
<feature type="binding site" evidence="1">
    <location>
        <position position="250"/>
    </location>
    <ligand>
        <name>Fe cation</name>
        <dbReference type="ChEBI" id="CHEBI:24875"/>
    </ligand>
</feature>